<dbReference type="EC" id="3.6.1.-"/>
<dbReference type="EMBL" id="AC011560">
    <property type="protein sequence ID" value="AAG51386.1"/>
    <property type="molecule type" value="Genomic_DNA"/>
</dbReference>
<dbReference type="EMBL" id="AC013428">
    <property type="protein sequence ID" value="AAF76368.1"/>
    <property type="status" value="ALT_SEQ"/>
    <property type="molecule type" value="Genomic_DNA"/>
</dbReference>
<dbReference type="EMBL" id="CP002686">
    <property type="protein sequence ID" value="AEE74935.1"/>
    <property type="molecule type" value="Genomic_DNA"/>
</dbReference>
<dbReference type="EMBL" id="AF370187">
    <property type="protein sequence ID" value="AAK44002.1"/>
    <property type="molecule type" value="mRNA"/>
</dbReference>
<dbReference type="EMBL" id="AY059145">
    <property type="protein sequence ID" value="AAL15251.1"/>
    <property type="molecule type" value="mRNA"/>
</dbReference>
<dbReference type="RefSeq" id="NP_187673.1">
    <property type="nucleotide sequence ID" value="NM_111898.4"/>
</dbReference>
<dbReference type="SMR" id="Q9CAF2"/>
<dbReference type="FunCoup" id="Q9CAF2">
    <property type="interactions" value="32"/>
</dbReference>
<dbReference type="STRING" id="3702.Q9CAF2"/>
<dbReference type="MetOSite" id="Q9CAF2"/>
<dbReference type="PaxDb" id="3702-AT3G10620.1"/>
<dbReference type="ProteomicsDB" id="248769"/>
<dbReference type="EnsemblPlants" id="AT3G10620.1">
    <property type="protein sequence ID" value="AT3G10620.1"/>
    <property type="gene ID" value="AT3G10620"/>
</dbReference>
<dbReference type="GeneID" id="820231"/>
<dbReference type="Gramene" id="AT3G10620.1">
    <property type="protein sequence ID" value="AT3G10620.1"/>
    <property type="gene ID" value="AT3G10620"/>
</dbReference>
<dbReference type="KEGG" id="ath:AT3G10620"/>
<dbReference type="Araport" id="AT3G10620"/>
<dbReference type="TAIR" id="AT3G10620">
    <property type="gene designation" value="NUDX26"/>
</dbReference>
<dbReference type="eggNOG" id="ENOG502QSDR">
    <property type="taxonomic scope" value="Eukaryota"/>
</dbReference>
<dbReference type="HOGENOM" id="CLU_087195_2_0_1"/>
<dbReference type="InParanoid" id="Q9CAF2"/>
<dbReference type="OMA" id="PGLEWQM"/>
<dbReference type="OrthoDB" id="276276at2759"/>
<dbReference type="PhylomeDB" id="Q9CAF2"/>
<dbReference type="BioCyc" id="ARA:AT3G10620-MONOMER"/>
<dbReference type="BRENDA" id="3.6.1.B16">
    <property type="organism ID" value="399"/>
</dbReference>
<dbReference type="SABIO-RK" id="Q9CAF2"/>
<dbReference type="PRO" id="PR:Q9CAF2"/>
<dbReference type="Proteomes" id="UP000006548">
    <property type="component" value="Chromosome 3"/>
</dbReference>
<dbReference type="ExpressionAtlas" id="Q9CAF2">
    <property type="expression patterns" value="baseline and differential"/>
</dbReference>
<dbReference type="GO" id="GO:0009507">
    <property type="term" value="C:chloroplast"/>
    <property type="evidence" value="ECO:0000314"/>
    <property type="project" value="TAIR"/>
</dbReference>
<dbReference type="GO" id="GO:0034432">
    <property type="term" value="F:bis(5'-adenosyl)-pentaphosphatase activity"/>
    <property type="evidence" value="ECO:0000314"/>
    <property type="project" value="TAIR"/>
</dbReference>
<dbReference type="GO" id="GO:0008893">
    <property type="term" value="F:guanosine-3',5'-bis(diphosphate) 3'-diphosphatase activity"/>
    <property type="evidence" value="ECO:0000314"/>
    <property type="project" value="TAIR"/>
</dbReference>
<dbReference type="GO" id="GO:0046872">
    <property type="term" value="F:metal ion binding"/>
    <property type="evidence" value="ECO:0007669"/>
    <property type="project" value="UniProtKB-KW"/>
</dbReference>
<dbReference type="GO" id="GO:0006753">
    <property type="term" value="P:nucleoside phosphate metabolic process"/>
    <property type="evidence" value="ECO:0000314"/>
    <property type="project" value="TAIR"/>
</dbReference>
<dbReference type="CDD" id="cd03671">
    <property type="entry name" value="NUDIX_Ap4A_hydrolase_plant_like"/>
    <property type="match status" value="1"/>
</dbReference>
<dbReference type="FunFam" id="3.90.79.10:FF:000032">
    <property type="entry name" value="Nudix hydrolase 25"/>
    <property type="match status" value="1"/>
</dbReference>
<dbReference type="Gene3D" id="3.90.79.10">
    <property type="entry name" value="Nucleoside Triphosphate Pyrophosphohydrolase"/>
    <property type="match status" value="1"/>
</dbReference>
<dbReference type="HAMAP" id="MF_00298">
    <property type="entry name" value="Nudix_RppH"/>
    <property type="match status" value="1"/>
</dbReference>
<dbReference type="InterPro" id="IPR020476">
    <property type="entry name" value="Nudix_hydrolase"/>
</dbReference>
<dbReference type="InterPro" id="IPR015797">
    <property type="entry name" value="NUDIX_hydrolase-like_dom_sf"/>
</dbReference>
<dbReference type="InterPro" id="IPR020084">
    <property type="entry name" value="NUDIX_hydrolase_CS"/>
</dbReference>
<dbReference type="InterPro" id="IPR000086">
    <property type="entry name" value="NUDIX_hydrolase_dom"/>
</dbReference>
<dbReference type="InterPro" id="IPR022927">
    <property type="entry name" value="RppH"/>
</dbReference>
<dbReference type="NCBIfam" id="NF001936">
    <property type="entry name" value="PRK00714.1-3"/>
    <property type="match status" value="1"/>
</dbReference>
<dbReference type="NCBIfam" id="NF001938">
    <property type="entry name" value="PRK00714.1-5"/>
    <property type="match status" value="1"/>
</dbReference>
<dbReference type="PANTHER" id="PTHR11839:SF22">
    <property type="entry name" value="NUDIX HYDROLASE 26, CHLOROPLASTIC"/>
    <property type="match status" value="1"/>
</dbReference>
<dbReference type="PANTHER" id="PTHR11839">
    <property type="entry name" value="UDP/ADP-SUGAR PYROPHOSPHATASE"/>
    <property type="match status" value="1"/>
</dbReference>
<dbReference type="Pfam" id="PF00293">
    <property type="entry name" value="NUDIX"/>
    <property type="match status" value="1"/>
</dbReference>
<dbReference type="PRINTS" id="PR00502">
    <property type="entry name" value="NUDIXFAMILY"/>
</dbReference>
<dbReference type="SUPFAM" id="SSF55811">
    <property type="entry name" value="Nudix"/>
    <property type="match status" value="1"/>
</dbReference>
<dbReference type="PROSITE" id="PS51462">
    <property type="entry name" value="NUDIX"/>
    <property type="match status" value="1"/>
</dbReference>
<dbReference type="PROSITE" id="PS00893">
    <property type="entry name" value="NUDIX_BOX"/>
    <property type="match status" value="1"/>
</dbReference>
<sequence>MALYRPLLLHHPTSPSVTTFLRNYPSKPIKFSSLPFLHRCRKSRVSSSSARCCSSMESPPEGYRRNVGVCLMNSSKKIFTASRLDIPSAWQMPQGGIDEGEDPRVAVMRELKEETGVHSAEILAEAPHWITYDFPPDVREKLKVRWGSDWKGQAQKWFLLKFTGKDEEINLLGDGTEKPEFGEWSWTSPDQVVENAVEFKKPVYKEVMSAFASHLQ</sequence>
<gene>
    <name type="primary">NUDT26</name>
    <name type="synonym">NUDX26</name>
    <name type="ordered locus">At3g10620</name>
    <name type="ORF">F13M14.9</name>
    <name type="ORF">F18K10.24</name>
</gene>
<organism>
    <name type="scientific">Arabidopsis thaliana</name>
    <name type="common">Mouse-ear cress</name>
    <dbReference type="NCBI Taxonomy" id="3702"/>
    <lineage>
        <taxon>Eukaryota</taxon>
        <taxon>Viridiplantae</taxon>
        <taxon>Streptophyta</taxon>
        <taxon>Embryophyta</taxon>
        <taxon>Tracheophyta</taxon>
        <taxon>Spermatophyta</taxon>
        <taxon>Magnoliopsida</taxon>
        <taxon>eudicotyledons</taxon>
        <taxon>Gunneridae</taxon>
        <taxon>Pentapetalae</taxon>
        <taxon>rosids</taxon>
        <taxon>malvids</taxon>
        <taxon>Brassicales</taxon>
        <taxon>Brassicaceae</taxon>
        <taxon>Camelineae</taxon>
        <taxon>Arabidopsis</taxon>
    </lineage>
</organism>
<accession>Q9CAF2</accession>
<accession>Q9LPN7</accession>
<reference key="1">
    <citation type="journal article" date="2000" name="Nature">
        <title>Sequence and analysis of chromosome 3 of the plant Arabidopsis thaliana.</title>
        <authorList>
            <person name="Salanoubat M."/>
            <person name="Lemcke K."/>
            <person name="Rieger M."/>
            <person name="Ansorge W."/>
            <person name="Unseld M."/>
            <person name="Fartmann B."/>
            <person name="Valle G."/>
            <person name="Bloecker H."/>
            <person name="Perez-Alonso M."/>
            <person name="Obermaier B."/>
            <person name="Delseny M."/>
            <person name="Boutry M."/>
            <person name="Grivell L.A."/>
            <person name="Mache R."/>
            <person name="Puigdomenech P."/>
            <person name="De Simone V."/>
            <person name="Choisne N."/>
            <person name="Artiguenave F."/>
            <person name="Robert C."/>
            <person name="Brottier P."/>
            <person name="Wincker P."/>
            <person name="Cattolico L."/>
            <person name="Weissenbach J."/>
            <person name="Saurin W."/>
            <person name="Quetier F."/>
            <person name="Schaefer M."/>
            <person name="Mueller-Auer S."/>
            <person name="Gabel C."/>
            <person name="Fuchs M."/>
            <person name="Benes V."/>
            <person name="Wurmbach E."/>
            <person name="Drzonek H."/>
            <person name="Erfle H."/>
            <person name="Jordan N."/>
            <person name="Bangert S."/>
            <person name="Wiedelmann R."/>
            <person name="Kranz H."/>
            <person name="Voss H."/>
            <person name="Holland R."/>
            <person name="Brandt P."/>
            <person name="Nyakatura G."/>
            <person name="Vezzi A."/>
            <person name="D'Angelo M."/>
            <person name="Pallavicini A."/>
            <person name="Toppo S."/>
            <person name="Simionati B."/>
            <person name="Conrad A."/>
            <person name="Hornischer K."/>
            <person name="Kauer G."/>
            <person name="Loehnert T.-H."/>
            <person name="Nordsiek G."/>
            <person name="Reichelt J."/>
            <person name="Scharfe M."/>
            <person name="Schoen O."/>
            <person name="Bargues M."/>
            <person name="Terol J."/>
            <person name="Climent J."/>
            <person name="Navarro P."/>
            <person name="Collado C."/>
            <person name="Perez-Perez A."/>
            <person name="Ottenwaelder B."/>
            <person name="Duchemin D."/>
            <person name="Cooke R."/>
            <person name="Laudie M."/>
            <person name="Berger-Llauro C."/>
            <person name="Purnelle B."/>
            <person name="Masuy D."/>
            <person name="de Haan M."/>
            <person name="Maarse A.C."/>
            <person name="Alcaraz J.-P."/>
            <person name="Cottet A."/>
            <person name="Casacuberta E."/>
            <person name="Monfort A."/>
            <person name="Argiriou A."/>
            <person name="Flores M."/>
            <person name="Liguori R."/>
            <person name="Vitale D."/>
            <person name="Mannhaupt G."/>
            <person name="Haase D."/>
            <person name="Schoof H."/>
            <person name="Rudd S."/>
            <person name="Zaccaria P."/>
            <person name="Mewes H.-W."/>
            <person name="Mayer K.F.X."/>
            <person name="Kaul S."/>
            <person name="Town C.D."/>
            <person name="Koo H.L."/>
            <person name="Tallon L.J."/>
            <person name="Jenkins J."/>
            <person name="Rooney T."/>
            <person name="Rizzo M."/>
            <person name="Walts A."/>
            <person name="Utterback T."/>
            <person name="Fujii C.Y."/>
            <person name="Shea T.P."/>
            <person name="Creasy T.H."/>
            <person name="Haas B."/>
            <person name="Maiti R."/>
            <person name="Wu D."/>
            <person name="Peterson J."/>
            <person name="Van Aken S."/>
            <person name="Pai G."/>
            <person name="Militscher J."/>
            <person name="Sellers P."/>
            <person name="Gill J.E."/>
            <person name="Feldblyum T.V."/>
            <person name="Preuss D."/>
            <person name="Lin X."/>
            <person name="Nierman W.C."/>
            <person name="Salzberg S.L."/>
            <person name="White O."/>
            <person name="Venter J.C."/>
            <person name="Fraser C.M."/>
            <person name="Kaneko T."/>
            <person name="Nakamura Y."/>
            <person name="Sato S."/>
            <person name="Kato T."/>
            <person name="Asamizu E."/>
            <person name="Sasamoto S."/>
            <person name="Kimura T."/>
            <person name="Idesawa K."/>
            <person name="Kawashima K."/>
            <person name="Kishida Y."/>
            <person name="Kiyokawa C."/>
            <person name="Kohara M."/>
            <person name="Matsumoto M."/>
            <person name="Matsuno A."/>
            <person name="Muraki A."/>
            <person name="Nakayama S."/>
            <person name="Nakazaki N."/>
            <person name="Shinpo S."/>
            <person name="Takeuchi C."/>
            <person name="Wada T."/>
            <person name="Watanabe A."/>
            <person name="Yamada M."/>
            <person name="Yasuda M."/>
            <person name="Tabata S."/>
        </authorList>
    </citation>
    <scope>NUCLEOTIDE SEQUENCE [LARGE SCALE GENOMIC DNA]</scope>
    <source>
        <strain>cv. Columbia</strain>
    </source>
</reference>
<reference key="2">
    <citation type="journal article" date="2017" name="Plant J.">
        <title>Araport11: a complete reannotation of the Arabidopsis thaliana reference genome.</title>
        <authorList>
            <person name="Cheng C.Y."/>
            <person name="Krishnakumar V."/>
            <person name="Chan A.P."/>
            <person name="Thibaud-Nissen F."/>
            <person name="Schobel S."/>
            <person name="Town C.D."/>
        </authorList>
    </citation>
    <scope>GENOME REANNOTATION</scope>
    <source>
        <strain>cv. Columbia</strain>
    </source>
</reference>
<reference key="3">
    <citation type="journal article" date="2003" name="Science">
        <title>Empirical analysis of transcriptional activity in the Arabidopsis genome.</title>
        <authorList>
            <person name="Yamada K."/>
            <person name="Lim J."/>
            <person name="Dale J.M."/>
            <person name="Chen H."/>
            <person name="Shinn P."/>
            <person name="Palm C.J."/>
            <person name="Southwick A.M."/>
            <person name="Wu H.C."/>
            <person name="Kim C.J."/>
            <person name="Nguyen M."/>
            <person name="Pham P.K."/>
            <person name="Cheuk R.F."/>
            <person name="Karlin-Newmann G."/>
            <person name="Liu S.X."/>
            <person name="Lam B."/>
            <person name="Sakano H."/>
            <person name="Wu T."/>
            <person name="Yu G."/>
            <person name="Miranda M."/>
            <person name="Quach H.L."/>
            <person name="Tripp M."/>
            <person name="Chang C.H."/>
            <person name="Lee J.M."/>
            <person name="Toriumi M.J."/>
            <person name="Chan M.M."/>
            <person name="Tang C.C."/>
            <person name="Onodera C.S."/>
            <person name="Deng J.M."/>
            <person name="Akiyama K."/>
            <person name="Ansari Y."/>
            <person name="Arakawa T."/>
            <person name="Banh J."/>
            <person name="Banno F."/>
            <person name="Bowser L."/>
            <person name="Brooks S.Y."/>
            <person name="Carninci P."/>
            <person name="Chao Q."/>
            <person name="Choy N."/>
            <person name="Enju A."/>
            <person name="Goldsmith A.D."/>
            <person name="Gurjal M."/>
            <person name="Hansen N.F."/>
            <person name="Hayashizaki Y."/>
            <person name="Johnson-Hopson C."/>
            <person name="Hsuan V.W."/>
            <person name="Iida K."/>
            <person name="Karnes M."/>
            <person name="Khan S."/>
            <person name="Koesema E."/>
            <person name="Ishida J."/>
            <person name="Jiang P.X."/>
            <person name="Jones T."/>
            <person name="Kawai J."/>
            <person name="Kamiya A."/>
            <person name="Meyers C."/>
            <person name="Nakajima M."/>
            <person name="Narusaka M."/>
            <person name="Seki M."/>
            <person name="Sakurai T."/>
            <person name="Satou M."/>
            <person name="Tamse R."/>
            <person name="Vaysberg M."/>
            <person name="Wallender E.K."/>
            <person name="Wong C."/>
            <person name="Yamamura Y."/>
            <person name="Yuan S."/>
            <person name="Shinozaki K."/>
            <person name="Davis R.W."/>
            <person name="Theologis A."/>
            <person name="Ecker J.R."/>
        </authorList>
    </citation>
    <scope>NUCLEOTIDE SEQUENCE [LARGE SCALE MRNA]</scope>
    <source>
        <strain>cv. Columbia</strain>
    </source>
</reference>
<reference key="4">
    <citation type="journal article" date="2008" name="Plant Physiol.">
        <title>Molecular characterization of organelle-type Nudix hydrolases in Arabidopsis.</title>
        <authorList>
            <person name="Ogawa T."/>
            <person name="Yoshimura K."/>
            <person name="Miyake H."/>
            <person name="Ishikawa K."/>
            <person name="Ito D."/>
            <person name="Tanabe N."/>
            <person name="Shigeoka S."/>
        </authorList>
    </citation>
    <scope>NOMENCLATURE</scope>
    <scope>FUNCTION</scope>
    <scope>SUBCELLULAR LOCATION</scope>
    <scope>TISSUE SPECIFICITY</scope>
    <scope>BIOPHYSICOCHEMICAL PROPERTIES</scope>
    <scope>DISRUPTION PHENOTYPE</scope>
</reference>
<evidence type="ECO:0000250" key="1"/>
<evidence type="ECO:0000255" key="2"/>
<evidence type="ECO:0000269" key="3">
    <source>
    </source>
</evidence>
<evidence type="ECO:0000305" key="4"/>
<name>NUD26_ARATH</name>
<comment type="function">
    <text evidence="3">Mediates the hydrolysis of some nucleoside diphosphate derivatives. Can use diadenosine 5',5'''-P(1)P(5) pentaphosphate (Ap(5)A), diadenosine 5',5'''-P(1)P(4) tetraphosphate (Ap(4)A) and diadenosine 5',5'''-P(1)P(3) triphosphate (Ap(3)A) as substrates.</text>
</comment>
<comment type="cofactor">
    <cofactor evidence="1">
        <name>Mg(2+)</name>
        <dbReference type="ChEBI" id="CHEBI:18420"/>
    </cofactor>
    <cofactor evidence="1">
        <name>Mn(2+)</name>
        <dbReference type="ChEBI" id="CHEBI:29035"/>
    </cofactor>
</comment>
<comment type="biophysicochemical properties">
    <kinetics>
        <KM evidence="3">9.6 uM for diadenosine 5',5'''-P(1)P(5) pentaphosphate</KM>
        <KM evidence="3">28.1 uM for diadenosine 5',5'''-P(1)P(4) tetraphosphate</KM>
        <Vmax evidence="3">35.2 umol/min/mg enzyme with diadenosine 5',5'''-P(1)P(5) pentaphosphate as substrate</Vmax>
        <Vmax evidence="3">50.5 umol/min/mg enzyme with diadenosine 5',5'''-P(1)P(4) tetraphosphate as substrate</Vmax>
    </kinetics>
</comment>
<comment type="subcellular location">
    <subcellularLocation>
        <location evidence="3">Plastid</location>
        <location evidence="3">Chloroplast</location>
    </subcellularLocation>
</comment>
<comment type="tissue specificity">
    <text evidence="3">Expressed in roots, leaves, stems and inflorescences.</text>
</comment>
<comment type="disruption phenotype">
    <text evidence="3">No visible phenotype under normal growth conditions.</text>
</comment>
<comment type="similarity">
    <text evidence="4">Belongs to the Nudix hydrolase family.</text>
</comment>
<comment type="sequence caution" evidence="4">
    <conflict type="erroneous gene model prediction">
        <sequence resource="EMBL-CDS" id="AAF76368"/>
    </conflict>
</comment>
<proteinExistence type="evidence at protein level"/>
<feature type="transit peptide" description="Chloroplast" evidence="2">
    <location>
        <begin position="1"/>
        <end position="53"/>
    </location>
</feature>
<feature type="chain" id="PRO_0000378338" description="Nudix hydrolase 26, chloroplastic">
    <location>
        <begin position="54"/>
        <end position="216"/>
    </location>
</feature>
<feature type="domain" description="Nudix hydrolase">
    <location>
        <begin position="62"/>
        <end position="209"/>
    </location>
</feature>
<feature type="short sequence motif" description="Nudix box">
    <location>
        <begin position="95"/>
        <end position="116"/>
    </location>
</feature>
<feature type="binding site" evidence="1">
    <location>
        <position position="110"/>
    </location>
    <ligand>
        <name>Mn(2+)</name>
        <dbReference type="ChEBI" id="CHEBI:29035"/>
    </ligand>
</feature>
<feature type="binding site" evidence="1">
    <location>
        <position position="114"/>
    </location>
    <ligand>
        <name>Mn(2+)</name>
        <dbReference type="ChEBI" id="CHEBI:29035"/>
    </ligand>
</feature>
<protein>
    <recommendedName>
        <fullName>Nudix hydrolase 26, chloroplastic</fullName>
        <shortName>AtNUDT26</shortName>
        <ecNumber>3.6.1.-</ecNumber>
    </recommendedName>
    <alternativeName>
        <fullName>Bis(5'-nucleosyl)-tetraphosphatase (asymmetrical)</fullName>
    </alternativeName>
</protein>
<keyword id="KW-0150">Chloroplast</keyword>
<keyword id="KW-0378">Hydrolase</keyword>
<keyword id="KW-0460">Magnesium</keyword>
<keyword id="KW-0464">Manganese</keyword>
<keyword id="KW-0479">Metal-binding</keyword>
<keyword id="KW-0934">Plastid</keyword>
<keyword id="KW-1185">Reference proteome</keyword>
<keyword id="KW-0809">Transit peptide</keyword>